<gene>
    <name evidence="1" type="primary">rph</name>
    <name type="ordered locus">xcc-b100_0933</name>
</gene>
<name>RNPH_XANCB</name>
<feature type="chain" id="PRO_1000129386" description="Ribonuclease PH">
    <location>
        <begin position="1"/>
        <end position="241"/>
    </location>
</feature>
<feature type="binding site" evidence="1">
    <location>
        <position position="89"/>
    </location>
    <ligand>
        <name>phosphate</name>
        <dbReference type="ChEBI" id="CHEBI:43474"/>
        <note>substrate</note>
    </ligand>
</feature>
<feature type="binding site" evidence="1">
    <location>
        <begin position="127"/>
        <end position="129"/>
    </location>
    <ligand>
        <name>phosphate</name>
        <dbReference type="ChEBI" id="CHEBI:43474"/>
        <note>substrate</note>
    </ligand>
</feature>
<keyword id="KW-0548">Nucleotidyltransferase</keyword>
<keyword id="KW-0694">RNA-binding</keyword>
<keyword id="KW-0698">rRNA processing</keyword>
<keyword id="KW-0808">Transferase</keyword>
<keyword id="KW-0819">tRNA processing</keyword>
<keyword id="KW-0820">tRNA-binding</keyword>
<comment type="function">
    <text evidence="1">Phosphorolytic 3'-5' exoribonuclease that plays an important role in tRNA 3'-end maturation. Removes nucleotide residues following the 3'-CCA terminus of tRNAs; can also add nucleotides to the ends of RNA molecules by using nucleoside diphosphates as substrates, but this may not be physiologically important. Probably plays a role in initiation of 16S rRNA degradation (leading to ribosome degradation) during starvation.</text>
</comment>
<comment type="catalytic activity">
    <reaction evidence="1">
        <text>tRNA(n+1) + phosphate = tRNA(n) + a ribonucleoside 5'-diphosphate</text>
        <dbReference type="Rhea" id="RHEA:10628"/>
        <dbReference type="Rhea" id="RHEA-COMP:17343"/>
        <dbReference type="Rhea" id="RHEA-COMP:17344"/>
        <dbReference type="ChEBI" id="CHEBI:43474"/>
        <dbReference type="ChEBI" id="CHEBI:57930"/>
        <dbReference type="ChEBI" id="CHEBI:173114"/>
        <dbReference type="EC" id="2.7.7.56"/>
    </reaction>
</comment>
<comment type="subunit">
    <text evidence="1">Homohexameric ring arranged as a trimer of dimers.</text>
</comment>
<comment type="similarity">
    <text evidence="1">Belongs to the RNase PH family.</text>
</comment>
<protein>
    <recommendedName>
        <fullName evidence="1">Ribonuclease PH</fullName>
        <shortName evidence="1">RNase PH</shortName>
        <ecNumber evidence="1">2.7.7.56</ecNumber>
    </recommendedName>
    <alternativeName>
        <fullName evidence="1">tRNA nucleotidyltransferase</fullName>
    </alternativeName>
</protein>
<sequence length="241" mass="25979">MSFSRPSGRTADQLRPVRIERAFTRHAEGSVLVSFGDTRVLCTASVENRVPNFLRGKGEGWVTAEYGMLPRSTHTRSDREAARGKQGGRTLEIQRLIGRALRACVDRNALGERTITLDCDVLQADGGTRTAAITGAYVALADAVNLLLKRGDIKKHPLIGAVAAVSVGIYRGEPVLDLDYPEDSDCDTDMNVVMNDGGGFIELQGTAEGHAFRRDELNALLALAEKGVGELFELQRAALAG</sequence>
<accession>B0RP96</accession>
<reference key="1">
    <citation type="journal article" date="2008" name="J. Biotechnol.">
        <title>The genome of Xanthomonas campestris pv. campestris B100 and its use for the reconstruction of metabolic pathways involved in xanthan biosynthesis.</title>
        <authorList>
            <person name="Vorhoelter F.-J."/>
            <person name="Schneiker S."/>
            <person name="Goesmann A."/>
            <person name="Krause L."/>
            <person name="Bekel T."/>
            <person name="Kaiser O."/>
            <person name="Linke B."/>
            <person name="Patschkowski T."/>
            <person name="Rueckert C."/>
            <person name="Schmid J."/>
            <person name="Sidhu V.K."/>
            <person name="Sieber V."/>
            <person name="Tauch A."/>
            <person name="Watt S.A."/>
            <person name="Weisshaar B."/>
            <person name="Becker A."/>
            <person name="Niehaus K."/>
            <person name="Puehler A."/>
        </authorList>
    </citation>
    <scope>NUCLEOTIDE SEQUENCE [LARGE SCALE GENOMIC DNA]</scope>
    <source>
        <strain>B100</strain>
    </source>
</reference>
<organism>
    <name type="scientific">Xanthomonas campestris pv. campestris (strain B100)</name>
    <dbReference type="NCBI Taxonomy" id="509169"/>
    <lineage>
        <taxon>Bacteria</taxon>
        <taxon>Pseudomonadati</taxon>
        <taxon>Pseudomonadota</taxon>
        <taxon>Gammaproteobacteria</taxon>
        <taxon>Lysobacterales</taxon>
        <taxon>Lysobacteraceae</taxon>
        <taxon>Xanthomonas</taxon>
    </lineage>
</organism>
<evidence type="ECO:0000255" key="1">
    <source>
        <dbReference type="HAMAP-Rule" id="MF_00564"/>
    </source>
</evidence>
<dbReference type="EC" id="2.7.7.56" evidence="1"/>
<dbReference type="EMBL" id="AM920689">
    <property type="protein sequence ID" value="CAP50281.1"/>
    <property type="molecule type" value="Genomic_DNA"/>
</dbReference>
<dbReference type="SMR" id="B0RP96"/>
<dbReference type="KEGG" id="xca:xcc-b100_0933"/>
<dbReference type="HOGENOM" id="CLU_050858_0_0_6"/>
<dbReference type="Proteomes" id="UP000001188">
    <property type="component" value="Chromosome"/>
</dbReference>
<dbReference type="GO" id="GO:0000175">
    <property type="term" value="F:3'-5'-RNA exonuclease activity"/>
    <property type="evidence" value="ECO:0007669"/>
    <property type="project" value="UniProtKB-UniRule"/>
</dbReference>
<dbReference type="GO" id="GO:0000049">
    <property type="term" value="F:tRNA binding"/>
    <property type="evidence" value="ECO:0007669"/>
    <property type="project" value="UniProtKB-UniRule"/>
</dbReference>
<dbReference type="GO" id="GO:0009022">
    <property type="term" value="F:tRNA nucleotidyltransferase activity"/>
    <property type="evidence" value="ECO:0007669"/>
    <property type="project" value="UniProtKB-UniRule"/>
</dbReference>
<dbReference type="GO" id="GO:0016075">
    <property type="term" value="P:rRNA catabolic process"/>
    <property type="evidence" value="ECO:0007669"/>
    <property type="project" value="UniProtKB-UniRule"/>
</dbReference>
<dbReference type="GO" id="GO:0006364">
    <property type="term" value="P:rRNA processing"/>
    <property type="evidence" value="ECO:0007669"/>
    <property type="project" value="UniProtKB-KW"/>
</dbReference>
<dbReference type="GO" id="GO:0008033">
    <property type="term" value="P:tRNA processing"/>
    <property type="evidence" value="ECO:0007669"/>
    <property type="project" value="UniProtKB-UniRule"/>
</dbReference>
<dbReference type="CDD" id="cd11362">
    <property type="entry name" value="RNase_PH_bact"/>
    <property type="match status" value="1"/>
</dbReference>
<dbReference type="FunFam" id="3.30.230.70:FF:000003">
    <property type="entry name" value="Ribonuclease PH"/>
    <property type="match status" value="1"/>
</dbReference>
<dbReference type="Gene3D" id="3.30.230.70">
    <property type="entry name" value="GHMP Kinase, N-terminal domain"/>
    <property type="match status" value="1"/>
</dbReference>
<dbReference type="HAMAP" id="MF_00564">
    <property type="entry name" value="RNase_PH"/>
    <property type="match status" value="1"/>
</dbReference>
<dbReference type="InterPro" id="IPR001247">
    <property type="entry name" value="ExoRNase_PH_dom1"/>
</dbReference>
<dbReference type="InterPro" id="IPR015847">
    <property type="entry name" value="ExoRNase_PH_dom2"/>
</dbReference>
<dbReference type="InterPro" id="IPR036345">
    <property type="entry name" value="ExoRNase_PH_dom2_sf"/>
</dbReference>
<dbReference type="InterPro" id="IPR027408">
    <property type="entry name" value="PNPase/RNase_PH_dom_sf"/>
</dbReference>
<dbReference type="InterPro" id="IPR020568">
    <property type="entry name" value="Ribosomal_Su5_D2-typ_SF"/>
</dbReference>
<dbReference type="InterPro" id="IPR050080">
    <property type="entry name" value="RNase_PH"/>
</dbReference>
<dbReference type="InterPro" id="IPR002381">
    <property type="entry name" value="RNase_PH_bac-type"/>
</dbReference>
<dbReference type="InterPro" id="IPR018336">
    <property type="entry name" value="RNase_PH_CS"/>
</dbReference>
<dbReference type="NCBIfam" id="TIGR01966">
    <property type="entry name" value="RNasePH"/>
    <property type="match status" value="1"/>
</dbReference>
<dbReference type="PANTHER" id="PTHR11953">
    <property type="entry name" value="EXOSOME COMPLEX COMPONENT"/>
    <property type="match status" value="1"/>
</dbReference>
<dbReference type="PANTHER" id="PTHR11953:SF0">
    <property type="entry name" value="EXOSOME COMPLEX COMPONENT RRP41"/>
    <property type="match status" value="1"/>
</dbReference>
<dbReference type="Pfam" id="PF01138">
    <property type="entry name" value="RNase_PH"/>
    <property type="match status" value="1"/>
</dbReference>
<dbReference type="Pfam" id="PF03725">
    <property type="entry name" value="RNase_PH_C"/>
    <property type="match status" value="1"/>
</dbReference>
<dbReference type="SUPFAM" id="SSF55666">
    <property type="entry name" value="Ribonuclease PH domain 2-like"/>
    <property type="match status" value="1"/>
</dbReference>
<dbReference type="SUPFAM" id="SSF54211">
    <property type="entry name" value="Ribosomal protein S5 domain 2-like"/>
    <property type="match status" value="1"/>
</dbReference>
<dbReference type="PROSITE" id="PS01277">
    <property type="entry name" value="RIBONUCLEASE_PH"/>
    <property type="match status" value="1"/>
</dbReference>
<proteinExistence type="inferred from homology"/>